<sequence>MAGAYIVVRIKGQADVPHWAETTLKLLRLEKKHRATIIQSKENTRGMLDKVKHYVAWQEIDAGLAMELLTKRGRGPGYKKLTEKDLEGTDYPGIKELADALATGKASMSKIDRIKPWFALAPPRHGFKRSTKKMYGQKGVLGANRELSELVRSMI</sequence>
<dbReference type="EMBL" id="DP000238">
    <property type="protein sequence ID" value="ABK76963.1"/>
    <property type="molecule type" value="Genomic_DNA"/>
</dbReference>
<dbReference type="SMR" id="A0RUE6"/>
<dbReference type="STRING" id="414004.CENSYa_0327"/>
<dbReference type="EnsemblBacteria" id="ABK76963">
    <property type="protein sequence ID" value="ABK76963"/>
    <property type="gene ID" value="CENSYa_0327"/>
</dbReference>
<dbReference type="KEGG" id="csy:CENSYa_0327"/>
<dbReference type="PATRIC" id="fig|414004.10.peg.292"/>
<dbReference type="HOGENOM" id="CLU_055156_6_0_2"/>
<dbReference type="Proteomes" id="UP000000758">
    <property type="component" value="Chromosome"/>
</dbReference>
<dbReference type="GO" id="GO:0022625">
    <property type="term" value="C:cytosolic large ribosomal subunit"/>
    <property type="evidence" value="ECO:0007669"/>
    <property type="project" value="TreeGrafter"/>
</dbReference>
<dbReference type="GO" id="GO:0003723">
    <property type="term" value="F:RNA binding"/>
    <property type="evidence" value="ECO:0007669"/>
    <property type="project" value="TreeGrafter"/>
</dbReference>
<dbReference type="GO" id="GO:0003735">
    <property type="term" value="F:structural constituent of ribosome"/>
    <property type="evidence" value="ECO:0007669"/>
    <property type="project" value="InterPro"/>
</dbReference>
<dbReference type="GO" id="GO:0000463">
    <property type="term" value="P:maturation of LSU-rRNA from tricistronic rRNA transcript (SSU-rRNA, 5.8S rRNA, LSU-rRNA)"/>
    <property type="evidence" value="ECO:0007669"/>
    <property type="project" value="TreeGrafter"/>
</dbReference>
<dbReference type="GO" id="GO:0006412">
    <property type="term" value="P:translation"/>
    <property type="evidence" value="ECO:0007669"/>
    <property type="project" value="UniProtKB-UniRule"/>
</dbReference>
<dbReference type="CDD" id="cd01657">
    <property type="entry name" value="Ribosomal_L7_archeal_euk"/>
    <property type="match status" value="1"/>
</dbReference>
<dbReference type="Gene3D" id="1.10.15.30">
    <property type="match status" value="1"/>
</dbReference>
<dbReference type="Gene3D" id="3.30.1390.20">
    <property type="entry name" value="Ribosomal protein L30, ferredoxin-like fold domain"/>
    <property type="match status" value="1"/>
</dbReference>
<dbReference type="HAMAP" id="MF_01371_A">
    <property type="entry name" value="Ribosomal_uL30_A"/>
    <property type="match status" value="1"/>
</dbReference>
<dbReference type="InterPro" id="IPR036919">
    <property type="entry name" value="Ribo_uL30_ferredoxin-like_sf"/>
</dbReference>
<dbReference type="InterPro" id="IPR039699">
    <property type="entry name" value="Ribosomal_uL30"/>
</dbReference>
<dbReference type="InterPro" id="IPR005997">
    <property type="entry name" value="Ribosomal_uL30_arc"/>
</dbReference>
<dbReference type="InterPro" id="IPR035808">
    <property type="entry name" value="Ribosomal_uL30_euk_arc"/>
</dbReference>
<dbReference type="InterPro" id="IPR016082">
    <property type="entry name" value="Ribosomal_uL30_ferredoxin-like"/>
</dbReference>
<dbReference type="NCBIfam" id="NF004711">
    <property type="entry name" value="PRK06049.1"/>
    <property type="match status" value="1"/>
</dbReference>
<dbReference type="PANTHER" id="PTHR11524">
    <property type="entry name" value="60S RIBOSOMAL PROTEIN L7"/>
    <property type="match status" value="1"/>
</dbReference>
<dbReference type="PANTHER" id="PTHR11524:SF16">
    <property type="entry name" value="LARGE RIBOSOMAL SUBUNIT PROTEIN UL30"/>
    <property type="match status" value="1"/>
</dbReference>
<dbReference type="Pfam" id="PF00327">
    <property type="entry name" value="Ribosomal_L30"/>
    <property type="match status" value="1"/>
</dbReference>
<dbReference type="SUPFAM" id="SSF55129">
    <property type="entry name" value="Ribosomal protein L30p/L7e"/>
    <property type="match status" value="1"/>
</dbReference>
<reference key="1">
    <citation type="journal article" date="2006" name="Proc. Natl. Acad. Sci. U.S.A.">
        <title>Genomic analysis of the uncultivated marine crenarchaeote Cenarchaeum symbiosum.</title>
        <authorList>
            <person name="Hallam S.J."/>
            <person name="Konstantinidis K.T."/>
            <person name="Putnam N."/>
            <person name="Schleper C."/>
            <person name="Watanabe Y."/>
            <person name="Sugahara J."/>
            <person name="Preston C."/>
            <person name="de la Torre J."/>
            <person name="Richardson P.M."/>
            <person name="DeLong E.F."/>
        </authorList>
    </citation>
    <scope>NUCLEOTIDE SEQUENCE [LARGE SCALE GENOMIC DNA]</scope>
    <source>
        <strain>A</strain>
    </source>
</reference>
<proteinExistence type="inferred from homology"/>
<gene>
    <name evidence="1" type="primary">rpl30</name>
    <name type="ordered locus">CENSYa_0327</name>
</gene>
<accession>A0RUE6</accession>
<organism>
    <name type="scientific">Cenarchaeum symbiosum (strain A)</name>
    <dbReference type="NCBI Taxonomy" id="414004"/>
    <lineage>
        <taxon>Archaea</taxon>
        <taxon>Nitrososphaerota</taxon>
        <taxon>Candidatus Cenarchaeales</taxon>
        <taxon>Candidatus Cenarchaeaceae</taxon>
        <taxon>Candidatus Cenarchaeum</taxon>
    </lineage>
</organism>
<protein>
    <recommendedName>
        <fullName evidence="1">Large ribosomal subunit protein uL30</fullName>
    </recommendedName>
    <alternativeName>
        <fullName evidence="2">50S ribosomal protein L30</fullName>
    </alternativeName>
</protein>
<name>RL30_CENSY</name>
<evidence type="ECO:0000255" key="1">
    <source>
        <dbReference type="HAMAP-Rule" id="MF_01371"/>
    </source>
</evidence>
<evidence type="ECO:0000305" key="2"/>
<keyword id="KW-1185">Reference proteome</keyword>
<keyword id="KW-0687">Ribonucleoprotein</keyword>
<keyword id="KW-0689">Ribosomal protein</keyword>
<comment type="subunit">
    <text evidence="1">Part of the 50S ribosomal subunit.</text>
</comment>
<comment type="similarity">
    <text evidence="1">Belongs to the universal ribosomal protein uL30 family.</text>
</comment>
<feature type="chain" id="PRO_0000347159" description="Large ribosomal subunit protein uL30">
    <location>
        <begin position="1"/>
        <end position="155"/>
    </location>
</feature>